<organism>
    <name type="scientific">Rattus norvegicus</name>
    <name type="common">Rat</name>
    <dbReference type="NCBI Taxonomy" id="10116"/>
    <lineage>
        <taxon>Eukaryota</taxon>
        <taxon>Metazoa</taxon>
        <taxon>Chordata</taxon>
        <taxon>Craniata</taxon>
        <taxon>Vertebrata</taxon>
        <taxon>Euteleostomi</taxon>
        <taxon>Mammalia</taxon>
        <taxon>Eutheria</taxon>
        <taxon>Euarchontoglires</taxon>
        <taxon>Glires</taxon>
        <taxon>Rodentia</taxon>
        <taxon>Myomorpha</taxon>
        <taxon>Muroidea</taxon>
        <taxon>Muridae</taxon>
        <taxon>Murinae</taxon>
        <taxon>Rattus</taxon>
    </lineage>
</organism>
<name>T22D1_RAT</name>
<comment type="function">
    <text evidence="1 2">Transcriptional repressor (By similarity). Acts on the C-type natriuretic peptide (CNP) promoter (By similarity). Acts to promote CASP3-mediated apoptosis (By similarity). Positively regulates TGF-beta signaling by interacting with SMAD7 which inhibits binding of SMAD7 to TGFBR1, preventing recruitment of SMURF ubiquitin ligases to TGFBR1 and inhibiting SMURF-mediated ubiquitination and degradation of TGFBR1 (By similarity). Contributes to enhancement of TGF-beta signaling by binding to and modulating the transcription activator activity of SMAD4 (By similarity). Promotes TGF-beta-induced transcription of COL1A2; via its interaction with TFE3 at E-boxes in the gene proximal promoter (By similarity). Plays a role in the repression of hematopoietic precursor cell growth (By similarity). Promotes IL2 deprivation-induced apoptosis in T-lymphocytes, via repression of TSC22D3/GILZ transcription and activation of the caspase cascade (By similarity).</text>
</comment>
<comment type="function">
    <molecule>Isoform 1</molecule>
    <text evidence="1">May act to negatively regulate TGFB3 signaling and thereby inhibit cell death in mammary gland cells.</text>
</comment>
<comment type="function">
    <molecule>Isoform 2</molecule>
    <text evidence="1">Positively regulates cell death in response to TGFB3 during mammary gland involution.</text>
</comment>
<comment type="subunit">
    <text evidence="1 2">Forms homodimers (By similarity). Forms heterodimers (By similarity). Component of a complex composed of TSC22D1 (via N-terminus), TGFBR1 and TGFBR2; the interaction between TSC22D1 and TGFBR1 is inhibited by SMAD7 and promoted by TGFB1 (By similarity). Interacts with SMAD7; the interaction requires TGF-beta and the interaction is inhibited by TGFBR1 (By similarity). Interacts with TPT1/fortilin; interaction results in the destabilization of TSC22D1 protein and prevents TSC22D1-mediated apoptosis (By similarity). Interacts with SMAD4 (via N-terminus) (By similarity). Interacts with ACVRL1/ALK1, ACVR1/ALK2, BMPR1A/ALK3, ACVR1B/ALK4, BMPR1B/ALK6, ACVR2A/ACTRII, and BMPR2 (By similarity). Interacts with SMAD6 (By similarity). Interacts with TFE3; the interaction is enhanced in the presence of TGF-beta (By similarity).</text>
</comment>
<comment type="subunit">
    <molecule>Isoform 1</molecule>
    <text evidence="2">Forms a heterodimer with TSC22D4/THG1.</text>
</comment>
<comment type="subunit">
    <molecule>Isoform 2</molecule>
    <text evidence="2">Forms a heterodimer with TSC22D4/THG1 (By similarity). Interacts with histone H1-2 (By similarity). Interacts with GNL3 (By similarity).</text>
</comment>
<comment type="subcellular location">
    <subcellularLocation>
        <location evidence="1">Cytoplasm</location>
    </subcellularLocation>
    <subcellularLocation>
        <location evidence="1">Nucleus</location>
    </subcellularLocation>
    <subcellularLocation>
        <location evidence="2">Cell membrane</location>
        <topology evidence="6">Peripheral membrane protein</topology>
    </subcellularLocation>
    <subcellularLocation>
        <location evidence="2">Mitochondrion</location>
    </subcellularLocation>
</comment>
<comment type="subcellular location">
    <molecule>Isoform 1</molecule>
    <subcellularLocation>
        <location evidence="2">Cytoplasm</location>
    </subcellularLocation>
    <subcellularLocation>
        <location evidence="2">Nucleus</location>
    </subcellularLocation>
    <subcellularLocation>
        <location evidence="2">Mitochondrion</location>
    </subcellularLocation>
</comment>
<comment type="subcellular location">
    <molecule>Isoform 2</molecule>
    <subcellularLocation>
        <location evidence="2">Cytoplasm</location>
    </subcellularLocation>
    <subcellularLocation>
        <location evidence="2">Nucleus</location>
    </subcellularLocation>
    <subcellularLocation>
        <location evidence="2">Mitochondrion</location>
    </subcellularLocation>
</comment>
<comment type="alternative products">
    <event type="alternative splicing"/>
    <isoform>
        <id>P62501-1</id>
        <name>1</name>
        <sequence type="displayed"/>
    </isoform>
    <isoform>
        <id>P62501-2</id>
        <name>2</name>
        <sequence type="described" ref="VSP_061919"/>
    </isoform>
</comment>
<comment type="tissue specificity">
    <text evidence="4 5">Ubiquitously expressed, abundantly expressed in testis, ovary, uterus, and lung (PubMed:8161377). Expressed in cardiomyocytes (PubMed:21791611).</text>
</comment>
<comment type="induction">
    <text evidence="4 5">Induced by follicle stimulating hormone (PubMed:8161377). Induced by isoproterenol-mediated myocardial fibrosis (PubMed:21791611).</text>
</comment>
<comment type="similarity">
    <text evidence="6">Belongs to the TSC-22/Dip/Bun family.</text>
</comment>
<sequence length="1050" mass="106786">MHQPPESTAAAAAAADISARKMAHPAMFPRRGSGGGSASALSAAGTGVSGAAPSSEDFPPPSSLLQPPPPAASSTQGPQPPPPQSLNLLSQAQLQGQPLAPGGTQMKKKSGFQITSVTPAQISASISSNNSIAEDTESYDDLDESHTEDLSSSEILDVSLSRATDLGEPERSSSEETLNNFQEAETPGAVSPNQPHLPQPHLPHLPQQNVVINGNAHPHHLHHHHHIHHGHHLHHGHHHSSHAAVASTSVPGGPPPTSPVSRKLSTAGSSDGGVPVPPTSAVSSAGLPASVMTSIRAPSTPGSIGVNSVTGTNATNNVNIAAVGGFSPGVANSVHPNAVSISGGPGVTSGVNVNVLSGMGNGTISSPVLNAAAGITVGVVSSQQQQPQQPPPTVNTSRFRVVKLDSTSEPFKKGRWTCTEFYERENAVPGPEGVAINKVVETVKQTPTEASSSERESTSGSSVSSSVSTLSHYTESVGSGEMGAPTVVVQQQQPLPPAPPGLQGVALQQLDFSSPGPQSISQSQMSQVQLQPQELSFQQKPNLQPVPLQATMSAATGIQPSPVNVVGVTSAVGQQPSISSLAQPQLPYPQPAPPVQTPLPGAPPQQLQYGQQQPMVPTQIAPGHGQPATQNPPSEYAQQQPIFQAAMSSGQSSSTGTGASVIPVAQPQGIQLPVQPTAVQAQPAGATGQPIGQAPTAVSTVPAGGQIASIGQQANIPTAVQPPSTQVTPSVVQQGAPPSSQVVLPAPTGIIHQGVQTSAPSLPQQLVIAPQSTMVAVPPQTQGVEAVAHGVVSHQLPTGSPLPSASTISVTSQVSSAGPSGMSSVPTNLVPPQNIAQPPATQNGSLVQSVSQSPLIATNINLPLAQQIPLSSTQFSTQSLAQAIGSQMEDTRRPAEPSSGGLPQTLSGDSGGVSAVSDGSSSSLAASASLFPLKVLPLTTPLVDGEDESSGASVVAIDNKIEQAMDLVKSHLMYAVREEVEVLKEQIKELIEKNSQLEQENNLLKTLASPEQLAQFQAQLQTGSPPATTQPQGTTQPPAQPASQGSGSTA</sequence>
<protein>
    <recommendedName>
        <fullName evidence="8">TSC22 domain family protein 1</fullName>
    </recommendedName>
    <alternativeName>
        <fullName evidence="8">Regulatory protein TSC-22</fullName>
    </alternativeName>
    <alternativeName>
        <fullName evidence="8">TGFB-stimulated clone 22 homolog</fullName>
    </alternativeName>
    <alternativeName>
        <fullName evidence="8">Transforming growth factor beta-1-induced transcript 4 protein</fullName>
    </alternativeName>
</protein>
<gene>
    <name evidence="8" type="primary">Tsc22d1</name>
    <name evidence="8" type="synonym">Tgfb1i4</name>
    <name evidence="8" type="synonym">Tsc22</name>
</gene>
<keyword id="KW-0025">Alternative splicing</keyword>
<keyword id="KW-1003">Cell membrane</keyword>
<keyword id="KW-0963">Cytoplasm</keyword>
<keyword id="KW-0472">Membrane</keyword>
<keyword id="KW-0496">Mitochondrion</keyword>
<keyword id="KW-0539">Nucleus</keyword>
<keyword id="KW-0597">Phosphoprotein</keyword>
<keyword id="KW-1185">Reference proteome</keyword>
<keyword id="KW-0678">Repressor</keyword>
<keyword id="KW-0804">Transcription</keyword>
<keyword id="KW-0805">Transcription regulation</keyword>
<accession>P62501</accession>
<accession>A0JPR0</accession>
<accession>D3Z8M8</accession>
<accession>Q00992</accession>
<evidence type="ECO:0000250" key="1">
    <source>
        <dbReference type="UniProtKB" id="P62500"/>
    </source>
</evidence>
<evidence type="ECO:0000250" key="2">
    <source>
        <dbReference type="UniProtKB" id="Q15714"/>
    </source>
</evidence>
<evidence type="ECO:0000256" key="3">
    <source>
        <dbReference type="SAM" id="MobiDB-lite"/>
    </source>
</evidence>
<evidence type="ECO:0000269" key="4">
    <source>
    </source>
</evidence>
<evidence type="ECO:0000269" key="5">
    <source>
    </source>
</evidence>
<evidence type="ECO:0000305" key="6"/>
<evidence type="ECO:0000312" key="7">
    <source>
        <dbReference type="Proteomes" id="UP000002494"/>
    </source>
</evidence>
<evidence type="ECO:0000312" key="8">
    <source>
        <dbReference type="RGD" id="3850"/>
    </source>
</evidence>
<dbReference type="EMBL" id="L25785">
    <property type="protein sequence ID" value="AAA20685.1"/>
    <property type="molecule type" value="mRNA"/>
</dbReference>
<dbReference type="EMBL" id="BC059146">
    <property type="protein sequence ID" value="AAH59146.1"/>
    <property type="molecule type" value="mRNA"/>
</dbReference>
<dbReference type="EMBL" id="BC127547">
    <property type="protein sequence ID" value="AAI27548.1"/>
    <property type="molecule type" value="mRNA"/>
</dbReference>
<dbReference type="RefSeq" id="NP_001103382.1">
    <molecule id="P62501-1"/>
    <property type="nucleotide sequence ID" value="NM_001109912.1"/>
</dbReference>
<dbReference type="RefSeq" id="NP_037175.1">
    <molecule id="P62501-2"/>
    <property type="nucleotide sequence ID" value="NM_013043.2"/>
</dbReference>
<dbReference type="RefSeq" id="XP_006252401.1">
    <property type="nucleotide sequence ID" value="XM_006252339.1"/>
</dbReference>
<dbReference type="RefSeq" id="XP_063130627.1">
    <molecule id="P62501-1"/>
    <property type="nucleotide sequence ID" value="XM_063274557.1"/>
</dbReference>
<dbReference type="RefSeq" id="XP_063130628.1">
    <molecule id="P62501-1"/>
    <property type="nucleotide sequence ID" value="XM_063274558.1"/>
</dbReference>
<dbReference type="RefSeq" id="XP_063130629.1">
    <molecule id="P62501-1"/>
    <property type="nucleotide sequence ID" value="XM_063274559.1"/>
</dbReference>
<dbReference type="SMR" id="P62501"/>
<dbReference type="BioGRID" id="269855">
    <property type="interactions" value="2"/>
</dbReference>
<dbReference type="FunCoup" id="P62501">
    <property type="interactions" value="1"/>
</dbReference>
<dbReference type="STRING" id="10116.ENSRNOP00000055007"/>
<dbReference type="GlyGen" id="P62501">
    <property type="glycosylation" value="4 sites"/>
</dbReference>
<dbReference type="PhosphoSitePlus" id="P62501"/>
<dbReference type="jPOST" id="P62501"/>
<dbReference type="PaxDb" id="10116-ENSRNOP00000055007"/>
<dbReference type="Ensembl" id="ENSRNOT00000001360.4">
    <molecule id="P62501-2"/>
    <property type="protein sequence ID" value="ENSRNOP00000001360.2"/>
    <property type="gene ID" value="ENSRNOG00000001030.9"/>
</dbReference>
<dbReference type="Ensembl" id="ENSRNOT00000058206.5">
    <molecule id="P62501-1"/>
    <property type="protein sequence ID" value="ENSRNOP00000055007.2"/>
    <property type="gene ID" value="ENSRNOG00000001030.9"/>
</dbReference>
<dbReference type="GeneID" id="498545"/>
<dbReference type="KEGG" id="rno:498545"/>
<dbReference type="UCSC" id="RGD:3850">
    <molecule id="P62501-1"/>
    <property type="organism name" value="rat"/>
</dbReference>
<dbReference type="AGR" id="RGD:3850"/>
<dbReference type="CTD" id="8848"/>
<dbReference type="RGD" id="3850">
    <property type="gene designation" value="Tsc22d1"/>
</dbReference>
<dbReference type="eggNOG" id="KOG4797">
    <property type="taxonomic scope" value="Eukaryota"/>
</dbReference>
<dbReference type="GeneTree" id="ENSGT00940000159144"/>
<dbReference type="HOGENOM" id="CLU_148757_0_0_1"/>
<dbReference type="InParanoid" id="P62501"/>
<dbReference type="OMA" id="EDSGHQQ"/>
<dbReference type="OrthoDB" id="46529at9989"/>
<dbReference type="TreeFam" id="TF318837"/>
<dbReference type="PRO" id="PR:P62501"/>
<dbReference type="Proteomes" id="UP000002494">
    <property type="component" value="Chromosome 15"/>
</dbReference>
<dbReference type="Bgee" id="ENSRNOG00000001030">
    <property type="expression patterns" value="Expressed in ovary and 19 other cell types or tissues"/>
</dbReference>
<dbReference type="ExpressionAtlas" id="P62501">
    <property type="expression patterns" value="baseline and differential"/>
</dbReference>
<dbReference type="GO" id="GO:0005737">
    <property type="term" value="C:cytoplasm"/>
    <property type="evidence" value="ECO:0000250"/>
    <property type="project" value="UniProtKB"/>
</dbReference>
<dbReference type="GO" id="GO:0005829">
    <property type="term" value="C:cytosol"/>
    <property type="evidence" value="ECO:0000318"/>
    <property type="project" value="GO_Central"/>
</dbReference>
<dbReference type="GO" id="GO:0005739">
    <property type="term" value="C:mitochondrion"/>
    <property type="evidence" value="ECO:0000266"/>
    <property type="project" value="RGD"/>
</dbReference>
<dbReference type="GO" id="GO:0005634">
    <property type="term" value="C:nucleus"/>
    <property type="evidence" value="ECO:0000266"/>
    <property type="project" value="RGD"/>
</dbReference>
<dbReference type="GO" id="GO:0005886">
    <property type="term" value="C:plasma membrane"/>
    <property type="evidence" value="ECO:0000250"/>
    <property type="project" value="UniProtKB"/>
</dbReference>
<dbReference type="GO" id="GO:0001228">
    <property type="term" value="F:DNA-binding transcription activator activity, RNA polymerase II-specific"/>
    <property type="evidence" value="ECO:0000314"/>
    <property type="project" value="NTNU_SB"/>
</dbReference>
<dbReference type="GO" id="GO:0042802">
    <property type="term" value="F:identical protein binding"/>
    <property type="evidence" value="ECO:0000266"/>
    <property type="project" value="RGD"/>
</dbReference>
<dbReference type="GO" id="GO:0000978">
    <property type="term" value="F:RNA polymerase II cis-regulatory region sequence-specific DNA binding"/>
    <property type="evidence" value="ECO:0000314"/>
    <property type="project" value="NTNU_SB"/>
</dbReference>
<dbReference type="GO" id="GO:0003713">
    <property type="term" value="F:transcription coactivator activity"/>
    <property type="evidence" value="ECO:0000266"/>
    <property type="project" value="RGD"/>
</dbReference>
<dbReference type="GO" id="GO:0043066">
    <property type="term" value="P:negative regulation of apoptotic process"/>
    <property type="evidence" value="ECO:0000318"/>
    <property type="project" value="GO_Central"/>
</dbReference>
<dbReference type="GO" id="GO:1902034">
    <property type="term" value="P:negative regulation of hematopoietic stem cell proliferation"/>
    <property type="evidence" value="ECO:0000250"/>
    <property type="project" value="UniProtKB"/>
</dbReference>
<dbReference type="GO" id="GO:0043069">
    <property type="term" value="P:negative regulation of programmed cell death"/>
    <property type="evidence" value="ECO:0000250"/>
    <property type="project" value="UniProtKB"/>
</dbReference>
<dbReference type="GO" id="GO:0043065">
    <property type="term" value="P:positive regulation of apoptotic process"/>
    <property type="evidence" value="ECO:0000250"/>
    <property type="project" value="UniProtKB"/>
</dbReference>
<dbReference type="GO" id="GO:0008284">
    <property type="term" value="P:positive regulation of cell population proliferation"/>
    <property type="evidence" value="ECO:0000318"/>
    <property type="project" value="GO_Central"/>
</dbReference>
<dbReference type="GO" id="GO:0043068">
    <property type="term" value="P:positive regulation of programmed cell death"/>
    <property type="evidence" value="ECO:0000250"/>
    <property type="project" value="UniProtKB"/>
</dbReference>
<dbReference type="GO" id="GO:0045944">
    <property type="term" value="P:positive regulation of transcription by RNA polymerase II"/>
    <property type="evidence" value="ECO:0000314"/>
    <property type="project" value="NTNU_SB"/>
</dbReference>
<dbReference type="GO" id="GO:0030511">
    <property type="term" value="P:positive regulation of transforming growth factor beta receptor signaling pathway"/>
    <property type="evidence" value="ECO:0000250"/>
    <property type="project" value="UniProtKB"/>
</dbReference>
<dbReference type="CDD" id="cd21938">
    <property type="entry name" value="ZIP_TSC22D1"/>
    <property type="match status" value="1"/>
</dbReference>
<dbReference type="FunFam" id="1.20.5.490:FF:000002">
    <property type="entry name" value="TSC22 domain family, member 1"/>
    <property type="match status" value="1"/>
</dbReference>
<dbReference type="Gene3D" id="1.20.5.490">
    <property type="entry name" value="Single helix bin"/>
    <property type="match status" value="1"/>
</dbReference>
<dbReference type="InterPro" id="IPR000580">
    <property type="entry name" value="TSC22/Bun"/>
</dbReference>
<dbReference type="InterPro" id="IPR047862">
    <property type="entry name" value="TSC22/BUN_CS"/>
</dbReference>
<dbReference type="PANTHER" id="PTHR46745">
    <property type="entry name" value="TSC22 DOMAIN FAMILY PROTEIN 1"/>
    <property type="match status" value="1"/>
</dbReference>
<dbReference type="PANTHER" id="PTHR46745:SF1">
    <property type="entry name" value="TSC22 DOMAIN FAMILY PROTEIN 1"/>
    <property type="match status" value="1"/>
</dbReference>
<dbReference type="Pfam" id="PF01166">
    <property type="entry name" value="TSC22"/>
    <property type="match status" value="1"/>
</dbReference>
<dbReference type="SUPFAM" id="SSF58026">
    <property type="entry name" value="Delta-sleep-inducing peptide immunoreactive peptide"/>
    <property type="match status" value="1"/>
</dbReference>
<dbReference type="PROSITE" id="PS01289">
    <property type="entry name" value="TSC22"/>
    <property type="match status" value="1"/>
</dbReference>
<reference key="1">
    <citation type="journal article" date="1994" name="Endocrinology">
        <title>Cloning of rat Sertoli cell follicle-stimulating hormone primary response complementary deoxyribonucleic acid: regulation of TSC-22 gene expression.</title>
        <authorList>
            <person name="Hamil K.G."/>
            <person name="Hall S.H."/>
        </authorList>
    </citation>
    <scope>NUCLEOTIDE SEQUENCE [MRNA] (ISOFORM 2)</scope>
    <scope>TISSUE SPECIFICITY</scope>
    <scope>INDUCTION BY FOLLICLE STIMULATING HORMONE</scope>
    <source>
        <strain>Sprague-Dawley</strain>
        <tissue>Testis</tissue>
    </source>
</reference>
<reference key="2">
    <citation type="journal article" date="1996" name="Eur. J. Biochem.">
        <title>Molecular cloning and characterization of a transcription factor for the C-type natriuretic peptide gene promoter.</title>
        <authorList>
            <person name="Ohta S."/>
            <person name="Shimekake Y."/>
            <person name="Nagata K."/>
        </authorList>
    </citation>
    <scope>NUCLEOTIDE SEQUENCE [MRNA] (ISOFORM 2)</scope>
</reference>
<reference evidence="7" key="3">
    <citation type="journal article" date="2004" name="Nature">
        <title>Genome sequence of the Brown Norway rat yields insights into mammalian evolution.</title>
        <authorList>
            <person name="Gibbs R.A."/>
            <person name="Weinstock G.M."/>
            <person name="Metzker M.L."/>
            <person name="Muzny D.M."/>
            <person name="Sodergren E.J."/>
            <person name="Scherer S."/>
            <person name="Scott G."/>
            <person name="Steffen D."/>
            <person name="Worley K.C."/>
            <person name="Burch P.E."/>
            <person name="Okwuonu G."/>
            <person name="Hines S."/>
            <person name="Lewis L."/>
            <person name="Deramo C."/>
            <person name="Delgado O."/>
            <person name="Dugan-Rocha S."/>
            <person name="Miner G."/>
            <person name="Morgan M."/>
            <person name="Hawes A."/>
            <person name="Gill R."/>
            <person name="Holt R.A."/>
            <person name="Adams M.D."/>
            <person name="Amanatides P.G."/>
            <person name="Baden-Tillson H."/>
            <person name="Barnstead M."/>
            <person name="Chin S."/>
            <person name="Evans C.A."/>
            <person name="Ferriera S."/>
            <person name="Fosler C."/>
            <person name="Glodek A."/>
            <person name="Gu Z."/>
            <person name="Jennings D."/>
            <person name="Kraft C.L."/>
            <person name="Nguyen T."/>
            <person name="Pfannkoch C.M."/>
            <person name="Sitter C."/>
            <person name="Sutton G.G."/>
            <person name="Venter J.C."/>
            <person name="Woodage T."/>
            <person name="Smith D."/>
            <person name="Lee H.-M."/>
            <person name="Gustafson E."/>
            <person name="Cahill P."/>
            <person name="Kana A."/>
            <person name="Doucette-Stamm L."/>
            <person name="Weinstock K."/>
            <person name="Fechtel K."/>
            <person name="Weiss R.B."/>
            <person name="Dunn D.M."/>
            <person name="Green E.D."/>
            <person name="Blakesley R.W."/>
            <person name="Bouffard G.G."/>
            <person name="De Jong P.J."/>
            <person name="Osoegawa K."/>
            <person name="Zhu B."/>
            <person name="Marra M."/>
            <person name="Schein J."/>
            <person name="Bosdet I."/>
            <person name="Fjell C."/>
            <person name="Jones S."/>
            <person name="Krzywinski M."/>
            <person name="Mathewson C."/>
            <person name="Siddiqui A."/>
            <person name="Wye N."/>
            <person name="McPherson J."/>
            <person name="Zhao S."/>
            <person name="Fraser C.M."/>
            <person name="Shetty J."/>
            <person name="Shatsman S."/>
            <person name="Geer K."/>
            <person name="Chen Y."/>
            <person name="Abramzon S."/>
            <person name="Nierman W.C."/>
            <person name="Havlak P.H."/>
            <person name="Chen R."/>
            <person name="Durbin K.J."/>
            <person name="Egan A."/>
            <person name="Ren Y."/>
            <person name="Song X.-Z."/>
            <person name="Li B."/>
            <person name="Liu Y."/>
            <person name="Qin X."/>
            <person name="Cawley S."/>
            <person name="Cooney A.J."/>
            <person name="D'Souza L.M."/>
            <person name="Martin K."/>
            <person name="Wu J.Q."/>
            <person name="Gonzalez-Garay M.L."/>
            <person name="Jackson A.R."/>
            <person name="Kalafus K.J."/>
            <person name="McLeod M.P."/>
            <person name="Milosavljevic A."/>
            <person name="Virk D."/>
            <person name="Volkov A."/>
            <person name="Wheeler D.A."/>
            <person name="Zhang Z."/>
            <person name="Bailey J.A."/>
            <person name="Eichler E.E."/>
            <person name="Tuzun E."/>
            <person name="Birney E."/>
            <person name="Mongin E."/>
            <person name="Ureta-Vidal A."/>
            <person name="Woodwark C."/>
            <person name="Zdobnov E."/>
            <person name="Bork P."/>
            <person name="Suyama M."/>
            <person name="Torrents D."/>
            <person name="Alexandersson M."/>
            <person name="Trask B.J."/>
            <person name="Young J.M."/>
            <person name="Huang H."/>
            <person name="Wang H."/>
            <person name="Xing H."/>
            <person name="Daniels S."/>
            <person name="Gietzen D."/>
            <person name="Schmidt J."/>
            <person name="Stevens K."/>
            <person name="Vitt U."/>
            <person name="Wingrove J."/>
            <person name="Camara F."/>
            <person name="Mar Alba M."/>
            <person name="Abril J.F."/>
            <person name="Guigo R."/>
            <person name="Smit A."/>
            <person name="Dubchak I."/>
            <person name="Rubin E.M."/>
            <person name="Couronne O."/>
            <person name="Poliakov A."/>
            <person name="Huebner N."/>
            <person name="Ganten D."/>
            <person name="Goesele C."/>
            <person name="Hummel O."/>
            <person name="Kreitler T."/>
            <person name="Lee Y.-A."/>
            <person name="Monti J."/>
            <person name="Schulz H."/>
            <person name="Zimdahl H."/>
            <person name="Himmelbauer H."/>
            <person name="Lehrach H."/>
            <person name="Jacob H.J."/>
            <person name="Bromberg S."/>
            <person name="Gullings-Handley J."/>
            <person name="Jensen-Seaman M.I."/>
            <person name="Kwitek A.E."/>
            <person name="Lazar J."/>
            <person name="Pasko D."/>
            <person name="Tonellato P.J."/>
            <person name="Twigger S."/>
            <person name="Ponting C.P."/>
            <person name="Duarte J.M."/>
            <person name="Rice S."/>
            <person name="Goodstadt L."/>
            <person name="Beatson S.A."/>
            <person name="Emes R.D."/>
            <person name="Winter E.E."/>
            <person name="Webber C."/>
            <person name="Brandt P."/>
            <person name="Nyakatura G."/>
            <person name="Adetobi M."/>
            <person name="Chiaromonte F."/>
            <person name="Elnitski L."/>
            <person name="Eswara P."/>
            <person name="Hardison R.C."/>
            <person name="Hou M."/>
            <person name="Kolbe D."/>
            <person name="Makova K."/>
            <person name="Miller W."/>
            <person name="Nekrutenko A."/>
            <person name="Riemer C."/>
            <person name="Schwartz S."/>
            <person name="Taylor J."/>
            <person name="Yang S."/>
            <person name="Zhang Y."/>
            <person name="Lindpaintner K."/>
            <person name="Andrews T.D."/>
            <person name="Caccamo M."/>
            <person name="Clamp M."/>
            <person name="Clarke L."/>
            <person name="Curwen V."/>
            <person name="Durbin R.M."/>
            <person name="Eyras E."/>
            <person name="Searle S.M."/>
            <person name="Cooper G.M."/>
            <person name="Batzoglou S."/>
            <person name="Brudno M."/>
            <person name="Sidow A."/>
            <person name="Stone E.A."/>
            <person name="Payseur B.A."/>
            <person name="Bourque G."/>
            <person name="Lopez-Otin C."/>
            <person name="Puente X.S."/>
            <person name="Chakrabarti K."/>
            <person name="Chatterji S."/>
            <person name="Dewey C."/>
            <person name="Pachter L."/>
            <person name="Bray N."/>
            <person name="Yap V.B."/>
            <person name="Caspi A."/>
            <person name="Tesler G."/>
            <person name="Pevzner P.A."/>
            <person name="Haussler D."/>
            <person name="Roskin K.M."/>
            <person name="Baertsch R."/>
            <person name="Clawson H."/>
            <person name="Furey T.S."/>
            <person name="Hinrichs A.S."/>
            <person name="Karolchik D."/>
            <person name="Kent W.J."/>
            <person name="Rosenbloom K.R."/>
            <person name="Trumbower H."/>
            <person name="Weirauch M."/>
            <person name="Cooper D.N."/>
            <person name="Stenson P.D."/>
            <person name="Ma B."/>
            <person name="Brent M."/>
            <person name="Arumugam M."/>
            <person name="Shteynberg D."/>
            <person name="Copley R.R."/>
            <person name="Taylor M.S."/>
            <person name="Riethman H."/>
            <person name="Mudunuri U."/>
            <person name="Peterson J."/>
            <person name="Guyer M."/>
            <person name="Felsenfeld A."/>
            <person name="Old S."/>
            <person name="Mockrin S."/>
            <person name="Collins F.S."/>
        </authorList>
    </citation>
    <scope>NUCLEOTIDE SEQUENCE [LARGE SCALE GENOMIC DNA]</scope>
    <source>
        <strain evidence="7">Brown Norway</strain>
    </source>
</reference>
<reference key="4">
    <citation type="journal article" date="2004" name="Genome Res.">
        <title>The status, quality, and expansion of the NIH full-length cDNA project: the Mammalian Gene Collection (MGC).</title>
        <authorList>
            <consortium name="The MGC Project Team"/>
        </authorList>
    </citation>
    <scope>NUCLEOTIDE SEQUENCE [LARGE SCALE MRNA] (ISOFORM 2)</scope>
    <source>
        <tissue>Liver</tissue>
        <tissue>Pituitary</tissue>
    </source>
</reference>
<reference key="5">
    <citation type="journal article" date="2011" name="Mol. Cell. Biol.">
        <title>TSC-22 promotes transforming growth factor beta-mediated cardiac myofibroblast differentiation by antagonizing Smad7 activity.</title>
        <authorList>
            <person name="Yan X."/>
            <person name="Zhang J."/>
            <person name="Pan L."/>
            <person name="Wang P."/>
            <person name="Xue H."/>
            <person name="Zhang L."/>
            <person name="Gao X."/>
            <person name="Zhao X."/>
            <person name="Ning Y."/>
            <person name="Chen Y.G."/>
        </authorList>
    </citation>
    <scope>TISSUE SPECIFICITY</scope>
    <scope>INDUCTION BY MYOCARDIAL FIBROSIS</scope>
</reference>
<feature type="chain" id="PRO_0000219367" description="TSC22 domain family protein 1">
    <location>
        <begin position="1"/>
        <end position="1050"/>
    </location>
</feature>
<feature type="region of interest" description="Required for interaction with TGFBR1 and promotion of TGF-beta signaling" evidence="2">
    <location>
        <begin position="1"/>
        <end position="99"/>
    </location>
</feature>
<feature type="region of interest" description="Disordered" evidence="3">
    <location>
        <begin position="22"/>
        <end position="111"/>
    </location>
</feature>
<feature type="region of interest" description="Disordered" evidence="3">
    <location>
        <begin position="126"/>
        <end position="285"/>
    </location>
</feature>
<feature type="region of interest" description="Disordered" evidence="3">
    <location>
        <begin position="445"/>
        <end position="479"/>
    </location>
</feature>
<feature type="region of interest" description="Disordered" evidence="3">
    <location>
        <begin position="511"/>
        <end position="531"/>
    </location>
</feature>
<feature type="region of interest" description="Disordered" evidence="3">
    <location>
        <begin position="581"/>
        <end position="609"/>
    </location>
</feature>
<feature type="region of interest" description="Disordered" evidence="3">
    <location>
        <begin position="720"/>
        <end position="740"/>
    </location>
</feature>
<feature type="region of interest" description="Disordered" evidence="3">
    <location>
        <begin position="795"/>
        <end position="847"/>
    </location>
</feature>
<feature type="region of interest" description="Disordered" evidence="3">
    <location>
        <begin position="879"/>
        <end position="919"/>
    </location>
</feature>
<feature type="region of interest" description="Leucine-zipper">
    <location>
        <begin position="983"/>
        <end position="1004"/>
    </location>
</feature>
<feature type="region of interest" description="Disordered" evidence="3">
    <location>
        <begin position="1015"/>
        <end position="1050"/>
    </location>
</feature>
<feature type="compositionally biased region" description="Low complexity" evidence="3">
    <location>
        <begin position="38"/>
        <end position="55"/>
    </location>
</feature>
<feature type="compositionally biased region" description="Pro residues" evidence="3">
    <location>
        <begin position="58"/>
        <end position="71"/>
    </location>
</feature>
<feature type="compositionally biased region" description="Low complexity" evidence="3">
    <location>
        <begin position="85"/>
        <end position="97"/>
    </location>
</feature>
<feature type="compositionally biased region" description="Acidic residues" evidence="3">
    <location>
        <begin position="134"/>
        <end position="143"/>
    </location>
</feature>
<feature type="compositionally biased region" description="Basic residues" evidence="3">
    <location>
        <begin position="217"/>
        <end position="241"/>
    </location>
</feature>
<feature type="compositionally biased region" description="Low complexity" evidence="3">
    <location>
        <begin position="458"/>
        <end position="476"/>
    </location>
</feature>
<feature type="compositionally biased region" description="Pro residues" evidence="3">
    <location>
        <begin position="586"/>
        <end position="603"/>
    </location>
</feature>
<feature type="compositionally biased region" description="Low complexity" evidence="3">
    <location>
        <begin position="906"/>
        <end position="919"/>
    </location>
</feature>
<feature type="compositionally biased region" description="Low complexity" evidence="3">
    <location>
        <begin position="1021"/>
        <end position="1050"/>
    </location>
</feature>
<feature type="modified residue" description="Phosphoserine" evidence="2">
    <location>
        <position position="265"/>
    </location>
</feature>
<feature type="splice variant" id="VSP_061919" description="In isoform 2." evidence="6">
    <original>MHQPPESTAAAAAAADISARKMAHPAMFPRRGSGGGSASALSAAGTGVSGAAPSSEDFPPPSSLLQPPPPAASSTQGPQPPPPQSLNLLSQAQLQGQPLAPGGTQMKKKSGFQITSVTPAQISASISSNNSIAEDTESYDDLDESHTEDLSSSEILDVSLSRATDLGEPERSSSEETLNNFQEAETPGAVSPNQPHLPQPHLPHLPQQNVVINGNAHPHHLHHHHHIHHGHHLHHGHHHSSHAAVASTSVPGGPPPTSPVSRKLSTAGSSDGGVPVPPTSAVSSAGLPASVMTSIRAPSTPGSIGVNSVTGTNATNNVNIAAVGGFSPGVANSVHPNAVSISGGPGVTSGVNVNVLSGMGNGTISSPVLNAAAGITVGVVSSQQQQPQQPPPTVNTSRFRVVKLDSTSEPFKKGRWTCTEFYERENAVPGPEGVAINKVVETVKQTPTEASSSERESTSGSSVSSSVSTLSHYTESVGSGEMGAPTVVVQQQQPLPPAPPGLQGVALQQLDFSSPGPQSISQSQMSQVQLQPQELSFQQKPNLQPVPLQATMSAATGIQPSPVNVVGVTSAVGQQPSISSLAQPQLPYPQPAPPVQTPLPGAPPQQLQYGQQQPMVPTQIAPGHGQPATQNPPSEYAQQQPIFQAAMSSGQSSSTGTGASVIPVAQPQGIQLPVQPTAVQAQPAGATGQPIGQAPTAVSTVPAGGQIASIGQQANIPTAVQPPSTQVTPSVVQQGAPPSSQVVLPAPTGIIHQGVQTSAPSLPQQLVIAPQSTMVAVPPQTQGVEAVAHGVVSHQLPTGSPLPSASTISVTSQVSSAGPSGMSSVPTNLVPPQNIAQPPATQNGSLVQSVSQSPLIATNINLPLAQQIPLSSTQFSTQSLAQAIGSQMEDTRRPAEPSSGGLPQTLSGDSGGVSAVSDGSSSSLAASASLFPLKVLPLTTPLVDGEDE</original>
    <variation>MKSQWCRPVAMDLGVYQLRHFSISFLSSLLGTENASVRLDN</variation>
    <location>
        <begin position="1"/>
        <end position="948"/>
    </location>
</feature>
<proteinExistence type="evidence at transcript level"/>